<dbReference type="EMBL" id="AY589491">
    <property type="protein sequence ID" value="AAT41869.1"/>
    <property type="molecule type" value="mRNA"/>
</dbReference>
<dbReference type="RefSeq" id="NP_001009089.1">
    <property type="nucleotide sequence ID" value="NM_001009089.1"/>
</dbReference>
<dbReference type="RefSeq" id="XP_009433640.1">
    <property type="nucleotide sequence ID" value="XM_009435365.5"/>
</dbReference>
<dbReference type="SMR" id="Q6J6I6"/>
<dbReference type="STRING" id="9598.ENSPTRP00000018667"/>
<dbReference type="PaxDb" id="9598-ENSPTRP00000018667"/>
<dbReference type="GeneID" id="455988"/>
<dbReference type="KEGG" id="ptr:455988"/>
<dbReference type="CTD" id="84924"/>
<dbReference type="eggNOG" id="KOG1721">
    <property type="taxonomic scope" value="Eukaryota"/>
</dbReference>
<dbReference type="InParanoid" id="Q6J6I6"/>
<dbReference type="Proteomes" id="UP000002277">
    <property type="component" value="Unplaced"/>
</dbReference>
<dbReference type="GO" id="GO:0005634">
    <property type="term" value="C:nucleus"/>
    <property type="evidence" value="ECO:0000318"/>
    <property type="project" value="GO_Central"/>
</dbReference>
<dbReference type="GO" id="GO:0000981">
    <property type="term" value="F:DNA-binding transcription factor activity, RNA polymerase II-specific"/>
    <property type="evidence" value="ECO:0000318"/>
    <property type="project" value="GO_Central"/>
</dbReference>
<dbReference type="GO" id="GO:0000977">
    <property type="term" value="F:RNA polymerase II transcription regulatory region sequence-specific DNA binding"/>
    <property type="evidence" value="ECO:0000318"/>
    <property type="project" value="GO_Central"/>
</dbReference>
<dbReference type="GO" id="GO:0008270">
    <property type="term" value="F:zinc ion binding"/>
    <property type="evidence" value="ECO:0007669"/>
    <property type="project" value="UniProtKB-KW"/>
</dbReference>
<dbReference type="GO" id="GO:0006357">
    <property type="term" value="P:regulation of transcription by RNA polymerase II"/>
    <property type="evidence" value="ECO:0000318"/>
    <property type="project" value="GO_Central"/>
</dbReference>
<dbReference type="CDD" id="cd07765">
    <property type="entry name" value="KRAB_A-box"/>
    <property type="match status" value="1"/>
</dbReference>
<dbReference type="FunFam" id="3.30.160.60:FF:000800">
    <property type="entry name" value="zinc finger protein 181 isoform X2"/>
    <property type="match status" value="3"/>
</dbReference>
<dbReference type="FunFam" id="3.30.160.60:FF:000052">
    <property type="entry name" value="zinc finger protein 546 isoform X1"/>
    <property type="match status" value="1"/>
</dbReference>
<dbReference type="FunFam" id="3.30.160.60:FF:000737">
    <property type="entry name" value="Zinc finger protein 565"/>
    <property type="match status" value="1"/>
</dbReference>
<dbReference type="FunFam" id="3.30.160.60:FF:001570">
    <property type="entry name" value="zinc finger protein 566 isoform X1"/>
    <property type="match status" value="1"/>
</dbReference>
<dbReference type="FunFam" id="3.30.160.60:FF:001037">
    <property type="entry name" value="zinc finger protein 566 isoform X2"/>
    <property type="match status" value="1"/>
</dbReference>
<dbReference type="FunFam" id="3.30.160.60:FF:001381">
    <property type="entry name" value="zinc finger protein 566 isoform X2"/>
    <property type="match status" value="1"/>
</dbReference>
<dbReference type="Gene3D" id="6.10.140.140">
    <property type="match status" value="1"/>
</dbReference>
<dbReference type="Gene3D" id="3.30.160.60">
    <property type="entry name" value="Classic Zinc Finger"/>
    <property type="match status" value="9"/>
</dbReference>
<dbReference type="InterPro" id="IPR001909">
    <property type="entry name" value="KRAB"/>
</dbReference>
<dbReference type="InterPro" id="IPR036051">
    <property type="entry name" value="KRAB_dom_sf"/>
</dbReference>
<dbReference type="InterPro" id="IPR050758">
    <property type="entry name" value="Znf_C2H2-type"/>
</dbReference>
<dbReference type="InterPro" id="IPR036236">
    <property type="entry name" value="Znf_C2H2_sf"/>
</dbReference>
<dbReference type="InterPro" id="IPR013087">
    <property type="entry name" value="Znf_C2H2_type"/>
</dbReference>
<dbReference type="PANTHER" id="PTHR23234:SF10">
    <property type="entry name" value="RIKEN CDNA 6720489N17 GENE-RELATED"/>
    <property type="match status" value="1"/>
</dbReference>
<dbReference type="PANTHER" id="PTHR23234">
    <property type="entry name" value="ZNF44 PROTEIN"/>
    <property type="match status" value="1"/>
</dbReference>
<dbReference type="Pfam" id="PF01352">
    <property type="entry name" value="KRAB"/>
    <property type="match status" value="1"/>
</dbReference>
<dbReference type="Pfam" id="PF00096">
    <property type="entry name" value="zf-C2H2"/>
    <property type="match status" value="5"/>
</dbReference>
<dbReference type="Pfam" id="PF13465">
    <property type="entry name" value="zf-H2C2_2"/>
    <property type="match status" value="1"/>
</dbReference>
<dbReference type="SMART" id="SM00349">
    <property type="entry name" value="KRAB"/>
    <property type="match status" value="1"/>
</dbReference>
<dbReference type="SMART" id="SM00355">
    <property type="entry name" value="ZnF_C2H2"/>
    <property type="match status" value="7"/>
</dbReference>
<dbReference type="SUPFAM" id="SSF57667">
    <property type="entry name" value="beta-beta-alpha zinc fingers"/>
    <property type="match status" value="5"/>
</dbReference>
<dbReference type="SUPFAM" id="SSF109640">
    <property type="entry name" value="KRAB domain (Kruppel-associated box)"/>
    <property type="match status" value="1"/>
</dbReference>
<dbReference type="PROSITE" id="PS50805">
    <property type="entry name" value="KRAB"/>
    <property type="match status" value="1"/>
</dbReference>
<dbReference type="PROSITE" id="PS00028">
    <property type="entry name" value="ZINC_FINGER_C2H2_1"/>
    <property type="match status" value="7"/>
</dbReference>
<dbReference type="PROSITE" id="PS50157">
    <property type="entry name" value="ZINC_FINGER_C2H2_2"/>
    <property type="match status" value="8"/>
</dbReference>
<evidence type="ECO:0000250" key="1">
    <source>
        <dbReference type="UniProtKB" id="Q969W8"/>
    </source>
</evidence>
<evidence type="ECO:0000255" key="2">
    <source>
        <dbReference type="PROSITE-ProRule" id="PRU00042"/>
    </source>
</evidence>
<evidence type="ECO:0000255" key="3">
    <source>
        <dbReference type="PROSITE-ProRule" id="PRU00119"/>
    </source>
</evidence>
<evidence type="ECO:0000305" key="4"/>
<comment type="function">
    <text>May be involved in transcriptional regulation.</text>
</comment>
<comment type="subcellular location">
    <subcellularLocation>
        <location evidence="4">Nucleus</location>
    </subcellularLocation>
</comment>
<comment type="similarity">
    <text evidence="4">Belongs to the krueppel C2H2-type zinc-finger protein family.</text>
</comment>
<proteinExistence type="evidence at transcript level"/>
<protein>
    <recommendedName>
        <fullName>Zinc finger protein 566</fullName>
    </recommendedName>
</protein>
<feature type="chain" id="PRO_0000047657" description="Zinc finger protein 566">
    <location>
        <begin position="1"/>
        <end position="418"/>
    </location>
</feature>
<feature type="domain" description="KRAB" evidence="3">
    <location>
        <begin position="6"/>
        <end position="77"/>
    </location>
</feature>
<feature type="zinc finger region" description="C2H2-type 1; degenerate" evidence="2">
    <location>
        <begin position="169"/>
        <end position="193"/>
    </location>
</feature>
<feature type="zinc finger region" description="C2H2-type 2" evidence="2">
    <location>
        <begin position="199"/>
        <end position="221"/>
    </location>
</feature>
<feature type="zinc finger region" description="C2H2-type 3" evidence="2">
    <location>
        <begin position="227"/>
        <end position="249"/>
    </location>
</feature>
<feature type="zinc finger region" description="C2H2-type 4" evidence="2">
    <location>
        <begin position="255"/>
        <end position="277"/>
    </location>
</feature>
<feature type="zinc finger region" description="C2H2-type 5" evidence="2">
    <location>
        <begin position="283"/>
        <end position="305"/>
    </location>
</feature>
<feature type="zinc finger region" description="C2H2-type 6" evidence="2">
    <location>
        <begin position="311"/>
        <end position="333"/>
    </location>
</feature>
<feature type="zinc finger region" description="C2H2-type 7" evidence="2">
    <location>
        <begin position="339"/>
        <end position="361"/>
    </location>
</feature>
<feature type="zinc finger region" description="C2H2-type 8" evidence="2">
    <location>
        <begin position="367"/>
        <end position="389"/>
    </location>
</feature>
<feature type="cross-link" description="Glycyl lysine isopeptide (Lys-Gly) (interchain with G-Cter in SUMO2)" evidence="1">
    <location>
        <position position="314"/>
    </location>
</feature>
<feature type="cross-link" description="Glycyl lysine isopeptide (Lys-Gly) (interchain with G-Cter in SUMO2)" evidence="1">
    <location>
        <position position="328"/>
    </location>
</feature>
<sequence>MAQESVMFSDVSVDFSQEEWECLNDDQRDLYRDVMLENYSNLVSMGHSISKPNVISYLEQGKEPWLVDRELTRGQWPVLESRCETKKLFLKKEIYEIESTQWEIMEKLTRHDFQCSSFRDDWECNRQFKKELGSQGGHFNQLVFTHEDLPTLSHHPSFTLQQIINSKKKFCASKEYRKTFRHGSQFATHEIIHTTEKPYECKECGKSFRHPSRLTHHQKIHTGKKPFECKECGKTFICGSDLTRHHRIHTGEKPYECKECGKAFSSGSNFTRHQRIHTGEKPYECKECGKAFSSGSNFTQHQRIHTGEKPYECKECGNAFSQSSQLIKHQRIHTGEKPYECKECEKAFRSGSDLTRHQRIHTGEKPYECKICGKAYSQSSQLISHHRIHTSEKPYEYRECGKNFNYDPQLIQHQNLYW</sequence>
<name>ZN566_PANTR</name>
<gene>
    <name type="primary">ZNF566</name>
</gene>
<reference key="1">
    <citation type="submission" date="2004-04" db="EMBL/GenBank/DDBJ databases">
        <title>Cloning of a novel chimpanzee ZNF566 gene.</title>
        <authorList>
            <person name="Zhong C."/>
            <person name="Zhou G."/>
            <person name="Yu L."/>
        </authorList>
    </citation>
    <scope>NUCLEOTIDE SEQUENCE [MRNA]</scope>
</reference>
<keyword id="KW-0238">DNA-binding</keyword>
<keyword id="KW-1017">Isopeptide bond</keyword>
<keyword id="KW-0479">Metal-binding</keyword>
<keyword id="KW-0539">Nucleus</keyword>
<keyword id="KW-1185">Reference proteome</keyword>
<keyword id="KW-0677">Repeat</keyword>
<keyword id="KW-0804">Transcription</keyword>
<keyword id="KW-0805">Transcription regulation</keyword>
<keyword id="KW-0832">Ubl conjugation</keyword>
<keyword id="KW-0862">Zinc</keyword>
<keyword id="KW-0863">Zinc-finger</keyword>
<accession>Q6J6I6</accession>
<organism>
    <name type="scientific">Pan troglodytes</name>
    <name type="common">Chimpanzee</name>
    <dbReference type="NCBI Taxonomy" id="9598"/>
    <lineage>
        <taxon>Eukaryota</taxon>
        <taxon>Metazoa</taxon>
        <taxon>Chordata</taxon>
        <taxon>Craniata</taxon>
        <taxon>Vertebrata</taxon>
        <taxon>Euteleostomi</taxon>
        <taxon>Mammalia</taxon>
        <taxon>Eutheria</taxon>
        <taxon>Euarchontoglires</taxon>
        <taxon>Primates</taxon>
        <taxon>Haplorrhini</taxon>
        <taxon>Catarrhini</taxon>
        <taxon>Hominidae</taxon>
        <taxon>Pan</taxon>
    </lineage>
</organism>